<sequence length="244" mass="27300">MTRKTDDIFAAPLQEMIDFKFDERVVAVFPDMIQRSVPGYGMIISNIGILAAKYAQPGSHCYDLGCSLGAATLSMRQRISQRDCDIIAVDNSPAMIERGRELLARDSQPTVPVTLICADIQSVVIENASVVVLNFTLQFIPPEQRLALIKRIHAGLRPGGILILSEKIAFSEPARQHFHVEMHHDFKRANGYSDLEISQKRSALENVMIPETVACHKERLQEAGFSSSELWFQCFNFASMVAFK</sequence>
<proteinExistence type="inferred from homology"/>
<protein>
    <recommendedName>
        <fullName evidence="1">Carboxy-S-adenosyl-L-methionine synthase</fullName>
        <shortName evidence="1">Cx-SAM synthase</shortName>
        <ecNumber evidence="1">2.1.3.-</ecNumber>
    </recommendedName>
</protein>
<organism>
    <name type="scientific">Geobacter sp. (strain M21)</name>
    <dbReference type="NCBI Taxonomy" id="443144"/>
    <lineage>
        <taxon>Bacteria</taxon>
        <taxon>Pseudomonadati</taxon>
        <taxon>Thermodesulfobacteriota</taxon>
        <taxon>Desulfuromonadia</taxon>
        <taxon>Geobacterales</taxon>
        <taxon>Geobacteraceae</taxon>
        <taxon>Geobacter</taxon>
    </lineage>
</organism>
<gene>
    <name evidence="1" type="primary">cmoA</name>
    <name type="ordered locus">GM21_2880</name>
</gene>
<comment type="function">
    <text evidence="1">Catalyzes the conversion of S-adenosyl-L-methionine (SAM) to carboxy-S-adenosyl-L-methionine (Cx-SAM).</text>
</comment>
<comment type="catalytic activity">
    <reaction evidence="1">
        <text>prephenate + S-adenosyl-L-methionine = carboxy-S-adenosyl-L-methionine + 3-phenylpyruvate + H2O</text>
        <dbReference type="Rhea" id="RHEA:51692"/>
        <dbReference type="ChEBI" id="CHEBI:15377"/>
        <dbReference type="ChEBI" id="CHEBI:18005"/>
        <dbReference type="ChEBI" id="CHEBI:29934"/>
        <dbReference type="ChEBI" id="CHEBI:59789"/>
        <dbReference type="ChEBI" id="CHEBI:134278"/>
    </reaction>
</comment>
<comment type="subunit">
    <text evidence="1">Homodimer.</text>
</comment>
<comment type="similarity">
    <text evidence="1">Belongs to the class I-like SAM-binding methyltransferase superfamily. Cx-SAM synthase family.</text>
</comment>
<feature type="chain" id="PRO_1000215637" description="Carboxy-S-adenosyl-L-methionine synthase">
    <location>
        <begin position="1"/>
        <end position="244"/>
    </location>
</feature>
<feature type="binding site" evidence="1">
    <location>
        <position position="40"/>
    </location>
    <ligand>
        <name>S-adenosyl-L-methionine</name>
        <dbReference type="ChEBI" id="CHEBI:59789"/>
    </ligand>
</feature>
<feature type="binding site" evidence="1">
    <location>
        <begin position="65"/>
        <end position="67"/>
    </location>
    <ligand>
        <name>S-adenosyl-L-methionine</name>
        <dbReference type="ChEBI" id="CHEBI:59789"/>
    </ligand>
</feature>
<feature type="binding site" evidence="1">
    <location>
        <begin position="90"/>
        <end position="91"/>
    </location>
    <ligand>
        <name>S-adenosyl-L-methionine</name>
        <dbReference type="ChEBI" id="CHEBI:59789"/>
    </ligand>
</feature>
<feature type="binding site" evidence="1">
    <location>
        <begin position="119"/>
        <end position="120"/>
    </location>
    <ligand>
        <name>S-adenosyl-L-methionine</name>
        <dbReference type="ChEBI" id="CHEBI:59789"/>
    </ligand>
</feature>
<feature type="binding site" evidence="1">
    <location>
        <position position="134"/>
    </location>
    <ligand>
        <name>S-adenosyl-L-methionine</name>
        <dbReference type="ChEBI" id="CHEBI:59789"/>
    </ligand>
</feature>
<feature type="binding site" evidence="1">
    <location>
        <position position="201"/>
    </location>
    <ligand>
        <name>S-adenosyl-L-methionine</name>
        <dbReference type="ChEBI" id="CHEBI:59789"/>
    </ligand>
</feature>
<accession>C6E228</accession>
<reference key="1">
    <citation type="submission" date="2009-07" db="EMBL/GenBank/DDBJ databases">
        <title>Complete sequence of Geobacter sp. M21.</title>
        <authorList>
            <consortium name="US DOE Joint Genome Institute"/>
            <person name="Lucas S."/>
            <person name="Copeland A."/>
            <person name="Lapidus A."/>
            <person name="Glavina del Rio T."/>
            <person name="Dalin E."/>
            <person name="Tice H."/>
            <person name="Bruce D."/>
            <person name="Goodwin L."/>
            <person name="Pitluck S."/>
            <person name="Saunders E."/>
            <person name="Brettin T."/>
            <person name="Detter J.C."/>
            <person name="Han C."/>
            <person name="Larimer F."/>
            <person name="Land M."/>
            <person name="Hauser L."/>
            <person name="Kyrpides N."/>
            <person name="Ovchinnikova G."/>
            <person name="Lovley D."/>
        </authorList>
    </citation>
    <scope>NUCLEOTIDE SEQUENCE [LARGE SCALE GENOMIC DNA]</scope>
    <source>
        <strain>M21</strain>
    </source>
</reference>
<evidence type="ECO:0000255" key="1">
    <source>
        <dbReference type="HAMAP-Rule" id="MF_01589"/>
    </source>
</evidence>
<dbReference type="EC" id="2.1.3.-" evidence="1"/>
<dbReference type="EMBL" id="CP001661">
    <property type="protein sequence ID" value="ACT18912.1"/>
    <property type="molecule type" value="Genomic_DNA"/>
</dbReference>
<dbReference type="SMR" id="C6E228"/>
<dbReference type="STRING" id="443144.GM21_2880"/>
<dbReference type="KEGG" id="gem:GM21_2880"/>
<dbReference type="eggNOG" id="COG4106">
    <property type="taxonomic scope" value="Bacteria"/>
</dbReference>
<dbReference type="HOGENOM" id="CLU_078475_0_0_7"/>
<dbReference type="OrthoDB" id="5386938at2"/>
<dbReference type="GO" id="GO:0016743">
    <property type="term" value="F:carboxyl- or carbamoyltransferase activity"/>
    <property type="evidence" value="ECO:0007669"/>
    <property type="project" value="UniProtKB-UniRule"/>
</dbReference>
<dbReference type="GO" id="GO:1904047">
    <property type="term" value="F:S-adenosyl-L-methionine binding"/>
    <property type="evidence" value="ECO:0007669"/>
    <property type="project" value="UniProtKB-UniRule"/>
</dbReference>
<dbReference type="GO" id="GO:0002098">
    <property type="term" value="P:tRNA wobble uridine modification"/>
    <property type="evidence" value="ECO:0007669"/>
    <property type="project" value="InterPro"/>
</dbReference>
<dbReference type="CDD" id="cd02440">
    <property type="entry name" value="AdoMet_MTases"/>
    <property type="match status" value="1"/>
</dbReference>
<dbReference type="Gene3D" id="3.40.50.150">
    <property type="entry name" value="Vaccinia Virus protein VP39"/>
    <property type="match status" value="1"/>
</dbReference>
<dbReference type="HAMAP" id="MF_01589">
    <property type="entry name" value="Cx_SAM_synthase"/>
    <property type="match status" value="1"/>
</dbReference>
<dbReference type="InterPro" id="IPR005271">
    <property type="entry name" value="CmoA"/>
</dbReference>
<dbReference type="InterPro" id="IPR041698">
    <property type="entry name" value="Methyltransf_25"/>
</dbReference>
<dbReference type="InterPro" id="IPR029063">
    <property type="entry name" value="SAM-dependent_MTases_sf"/>
</dbReference>
<dbReference type="NCBIfam" id="TIGR00740">
    <property type="entry name" value="carboxy-S-adenosyl-L-methionine synthase CmoA"/>
    <property type="match status" value="1"/>
</dbReference>
<dbReference type="NCBIfam" id="NF011995">
    <property type="entry name" value="PRK15451.1"/>
    <property type="match status" value="1"/>
</dbReference>
<dbReference type="PANTHER" id="PTHR43861:SF2">
    <property type="entry name" value="CARBOXY-S-ADENOSYL-L-METHIONINE SYNTHASE"/>
    <property type="match status" value="1"/>
</dbReference>
<dbReference type="PANTHER" id="PTHR43861">
    <property type="entry name" value="TRANS-ACONITATE 2-METHYLTRANSFERASE-RELATED"/>
    <property type="match status" value="1"/>
</dbReference>
<dbReference type="Pfam" id="PF13649">
    <property type="entry name" value="Methyltransf_25"/>
    <property type="match status" value="1"/>
</dbReference>
<dbReference type="PIRSF" id="PIRSF006325">
    <property type="entry name" value="MeTrfase_bac"/>
    <property type="match status" value="1"/>
</dbReference>
<dbReference type="SUPFAM" id="SSF53335">
    <property type="entry name" value="S-adenosyl-L-methionine-dependent methyltransferases"/>
    <property type="match status" value="1"/>
</dbReference>
<name>CMOA_GEOSM</name>
<keyword id="KW-0949">S-adenosyl-L-methionine</keyword>
<keyword id="KW-0808">Transferase</keyword>